<proteinExistence type="inferred from homology"/>
<gene>
    <name evidence="1" type="primary">bioD2</name>
    <name type="synonym">bioD-B</name>
    <name type="ordered locus">HI_1550</name>
</gene>
<sequence length="191" mass="21097">MGKVIFISGIDTDVGKTIATGIYAKKLMEQGCSVITQKMIQTGCKNIADDLLVHRKIQGIDLTEEDLQGKTCPYVFEYPCSPHLAAKRESRKIEAKIIEKSTALLAEKYDYVLLEGAGGLMVPYCEEATTLDYIQLNNYPLILVTSGKLGSINHTLLSLEACRTRGISVLSVMYNGYPEYDLLLVKKPNAI</sequence>
<comment type="function">
    <text evidence="1">Catalyzes a mechanistically unusual reaction, the ATP-dependent insertion of CO2 between the N7 and N8 nitrogen atoms of 7,8-diaminopelargonic acid (DAPA, also called 7,8-diammoniononanoate) to form a ureido ring.</text>
</comment>
<comment type="catalytic activity">
    <reaction evidence="1">
        <text>(7R,8S)-7,8-diammoniononanoate + CO2 + ATP = (4R,5S)-dethiobiotin + ADP + phosphate + 3 H(+)</text>
        <dbReference type="Rhea" id="RHEA:15805"/>
        <dbReference type="ChEBI" id="CHEBI:15378"/>
        <dbReference type="ChEBI" id="CHEBI:16526"/>
        <dbReference type="ChEBI" id="CHEBI:30616"/>
        <dbReference type="ChEBI" id="CHEBI:43474"/>
        <dbReference type="ChEBI" id="CHEBI:149469"/>
        <dbReference type="ChEBI" id="CHEBI:149473"/>
        <dbReference type="ChEBI" id="CHEBI:456216"/>
        <dbReference type="EC" id="6.3.3.3"/>
    </reaction>
</comment>
<comment type="cofactor">
    <cofactor evidence="1">
        <name>Mg(2+)</name>
        <dbReference type="ChEBI" id="CHEBI:18420"/>
    </cofactor>
</comment>
<comment type="pathway">
    <text evidence="1">Cofactor biosynthesis; biotin biosynthesis; biotin from 7,8-diaminononanoate: step 1/2.</text>
</comment>
<comment type="subunit">
    <text evidence="1">Homodimer.</text>
</comment>
<comment type="subcellular location">
    <subcellularLocation>
        <location evidence="1">Cytoplasm</location>
    </subcellularLocation>
</comment>
<comment type="similarity">
    <text evidence="1">Belongs to the dethiobiotin synthetase family.</text>
</comment>
<dbReference type="EC" id="6.3.3.3" evidence="1"/>
<dbReference type="EMBL" id="L42023">
    <property type="protein sequence ID" value="AAC23200.1"/>
    <property type="molecule type" value="Genomic_DNA"/>
</dbReference>
<dbReference type="PIR" id="B64129">
    <property type="entry name" value="B64129"/>
</dbReference>
<dbReference type="RefSeq" id="NP_439699.1">
    <property type="nucleotide sequence ID" value="NC_000907.1"/>
</dbReference>
<dbReference type="SMR" id="P45248"/>
<dbReference type="STRING" id="71421.HI_1550"/>
<dbReference type="EnsemblBacteria" id="AAC23200">
    <property type="protein sequence ID" value="AAC23200"/>
    <property type="gene ID" value="HI_1550"/>
</dbReference>
<dbReference type="KEGG" id="hin:HI_1550"/>
<dbReference type="PATRIC" id="fig|71421.8.peg.1621"/>
<dbReference type="eggNOG" id="COG0132">
    <property type="taxonomic scope" value="Bacteria"/>
</dbReference>
<dbReference type="HOGENOM" id="CLU_072551_3_0_6"/>
<dbReference type="OrthoDB" id="9802097at2"/>
<dbReference type="PhylomeDB" id="P45248"/>
<dbReference type="BioCyc" id="HINF71421:G1GJ1-1570-MONOMER"/>
<dbReference type="UniPathway" id="UPA00078">
    <property type="reaction ID" value="UER00161"/>
</dbReference>
<dbReference type="Proteomes" id="UP000000579">
    <property type="component" value="Chromosome"/>
</dbReference>
<dbReference type="GO" id="GO:0005829">
    <property type="term" value="C:cytosol"/>
    <property type="evidence" value="ECO:0000318"/>
    <property type="project" value="GO_Central"/>
</dbReference>
<dbReference type="GO" id="GO:0005524">
    <property type="term" value="F:ATP binding"/>
    <property type="evidence" value="ECO:0007669"/>
    <property type="project" value="UniProtKB-UniRule"/>
</dbReference>
<dbReference type="GO" id="GO:0004141">
    <property type="term" value="F:dethiobiotin synthase activity"/>
    <property type="evidence" value="ECO:0000318"/>
    <property type="project" value="GO_Central"/>
</dbReference>
<dbReference type="GO" id="GO:0000287">
    <property type="term" value="F:magnesium ion binding"/>
    <property type="evidence" value="ECO:0007669"/>
    <property type="project" value="UniProtKB-UniRule"/>
</dbReference>
<dbReference type="GO" id="GO:0009102">
    <property type="term" value="P:biotin biosynthetic process"/>
    <property type="evidence" value="ECO:0000318"/>
    <property type="project" value="GO_Central"/>
</dbReference>
<dbReference type="CDD" id="cd03109">
    <property type="entry name" value="DTBS"/>
    <property type="match status" value="1"/>
</dbReference>
<dbReference type="FunFam" id="3.40.50.300:FF:000292">
    <property type="entry name" value="ATP-dependent dethiobiotin synthetase BioD"/>
    <property type="match status" value="1"/>
</dbReference>
<dbReference type="Gene3D" id="3.40.50.300">
    <property type="entry name" value="P-loop containing nucleotide triphosphate hydrolases"/>
    <property type="match status" value="1"/>
</dbReference>
<dbReference type="HAMAP" id="MF_00336">
    <property type="entry name" value="BioD"/>
    <property type="match status" value="1"/>
</dbReference>
<dbReference type="InterPro" id="IPR004472">
    <property type="entry name" value="DTB_synth_BioD"/>
</dbReference>
<dbReference type="InterPro" id="IPR027417">
    <property type="entry name" value="P-loop_NTPase"/>
</dbReference>
<dbReference type="NCBIfam" id="TIGR00347">
    <property type="entry name" value="bioD"/>
    <property type="match status" value="1"/>
</dbReference>
<dbReference type="PANTHER" id="PTHR43210:SF2">
    <property type="entry name" value="ATP-DEPENDENT DETHIOBIOTIN SYNTHETASE BIOD 2"/>
    <property type="match status" value="1"/>
</dbReference>
<dbReference type="PANTHER" id="PTHR43210">
    <property type="entry name" value="DETHIOBIOTIN SYNTHETASE"/>
    <property type="match status" value="1"/>
</dbReference>
<dbReference type="Pfam" id="PF13500">
    <property type="entry name" value="AAA_26"/>
    <property type="match status" value="1"/>
</dbReference>
<dbReference type="PIRSF" id="PIRSF006755">
    <property type="entry name" value="DTB_synth"/>
    <property type="match status" value="1"/>
</dbReference>
<dbReference type="SUPFAM" id="SSF52540">
    <property type="entry name" value="P-loop containing nucleoside triphosphate hydrolases"/>
    <property type="match status" value="1"/>
</dbReference>
<keyword id="KW-0067">ATP-binding</keyword>
<keyword id="KW-0093">Biotin biosynthesis</keyword>
<keyword id="KW-0963">Cytoplasm</keyword>
<keyword id="KW-0436">Ligase</keyword>
<keyword id="KW-0460">Magnesium</keyword>
<keyword id="KW-0479">Metal-binding</keyword>
<keyword id="KW-0547">Nucleotide-binding</keyword>
<keyword id="KW-1185">Reference proteome</keyword>
<feature type="chain" id="PRO_0000187970" description="ATP-dependent dethiobiotin synthetase BioD 2">
    <location>
        <begin position="1"/>
        <end position="191"/>
    </location>
</feature>
<feature type="active site" evidence="1">
    <location>
        <position position="38"/>
    </location>
</feature>
<feature type="binding site" evidence="1">
    <location>
        <begin position="13"/>
        <end position="18"/>
    </location>
    <ligand>
        <name>ATP</name>
        <dbReference type="ChEBI" id="CHEBI:30616"/>
    </ligand>
</feature>
<feature type="binding site" evidence="1">
    <location>
        <position position="17"/>
    </location>
    <ligand>
        <name>Mg(2+)</name>
        <dbReference type="ChEBI" id="CHEBI:18420"/>
    </ligand>
</feature>
<feature type="binding site" evidence="1">
    <location>
        <position position="42"/>
    </location>
    <ligand>
        <name>substrate</name>
    </ligand>
</feature>
<feature type="binding site" evidence="1">
    <location>
        <position position="50"/>
    </location>
    <ligand>
        <name>ATP</name>
        <dbReference type="ChEBI" id="CHEBI:30616"/>
    </ligand>
</feature>
<feature type="binding site" evidence="1">
    <location>
        <position position="50"/>
    </location>
    <ligand>
        <name>Mg(2+)</name>
        <dbReference type="ChEBI" id="CHEBI:18420"/>
    </ligand>
</feature>
<feature type="binding site" evidence="1">
    <location>
        <begin position="115"/>
        <end position="118"/>
    </location>
    <ligand>
        <name>ATP</name>
        <dbReference type="ChEBI" id="CHEBI:30616"/>
    </ligand>
</feature>
<feature type="binding site" evidence="1">
    <location>
        <position position="115"/>
    </location>
    <ligand>
        <name>Mg(2+)</name>
        <dbReference type="ChEBI" id="CHEBI:18420"/>
    </ligand>
</feature>
<evidence type="ECO:0000255" key="1">
    <source>
        <dbReference type="HAMAP-Rule" id="MF_00336"/>
    </source>
</evidence>
<reference key="1">
    <citation type="journal article" date="1995" name="Science">
        <title>Whole-genome random sequencing and assembly of Haemophilus influenzae Rd.</title>
        <authorList>
            <person name="Fleischmann R.D."/>
            <person name="Adams M.D."/>
            <person name="White O."/>
            <person name="Clayton R.A."/>
            <person name="Kirkness E.F."/>
            <person name="Kerlavage A.R."/>
            <person name="Bult C.J."/>
            <person name="Tomb J.-F."/>
            <person name="Dougherty B.A."/>
            <person name="Merrick J.M."/>
            <person name="McKenney K."/>
            <person name="Sutton G.G."/>
            <person name="FitzHugh W."/>
            <person name="Fields C.A."/>
            <person name="Gocayne J.D."/>
            <person name="Scott J.D."/>
            <person name="Shirley R."/>
            <person name="Liu L.-I."/>
            <person name="Glodek A."/>
            <person name="Kelley J.M."/>
            <person name="Weidman J.F."/>
            <person name="Phillips C.A."/>
            <person name="Spriggs T."/>
            <person name="Hedblom E."/>
            <person name="Cotton M.D."/>
            <person name="Utterback T.R."/>
            <person name="Hanna M.C."/>
            <person name="Nguyen D.T."/>
            <person name="Saudek D.M."/>
            <person name="Brandon R.C."/>
            <person name="Fine L.D."/>
            <person name="Fritchman J.L."/>
            <person name="Fuhrmann J.L."/>
            <person name="Geoghagen N.S.M."/>
            <person name="Gnehm C.L."/>
            <person name="McDonald L.A."/>
            <person name="Small K.V."/>
            <person name="Fraser C.M."/>
            <person name="Smith H.O."/>
            <person name="Venter J.C."/>
        </authorList>
    </citation>
    <scope>NUCLEOTIDE SEQUENCE [LARGE SCALE GENOMIC DNA]</scope>
    <source>
        <strain>ATCC 51907 / DSM 11121 / KW20 / Rd</strain>
    </source>
</reference>
<protein>
    <recommendedName>
        <fullName evidence="1">ATP-dependent dethiobiotin synthetase BioD 2</fullName>
        <ecNumber evidence="1">6.3.3.3</ecNumber>
    </recommendedName>
    <alternativeName>
        <fullName evidence="1">DTB synthetase 2</fullName>
        <shortName evidence="1">DTBS 2</shortName>
    </alternativeName>
    <alternativeName>
        <fullName evidence="1">Dethiobiotin synthase 2</fullName>
    </alternativeName>
</protein>
<accession>P45248</accession>
<organism>
    <name type="scientific">Haemophilus influenzae (strain ATCC 51907 / DSM 11121 / KW20 / Rd)</name>
    <dbReference type="NCBI Taxonomy" id="71421"/>
    <lineage>
        <taxon>Bacteria</taxon>
        <taxon>Pseudomonadati</taxon>
        <taxon>Pseudomonadota</taxon>
        <taxon>Gammaproteobacteria</taxon>
        <taxon>Pasteurellales</taxon>
        <taxon>Pasteurellaceae</taxon>
        <taxon>Haemophilus</taxon>
    </lineage>
</organism>
<name>BIOD2_HAEIN</name>